<feature type="chain" id="PRO_1000049942" description="Gamma-glutamyl phosphate reductase">
    <location>
        <begin position="1"/>
        <end position="410"/>
    </location>
</feature>
<proteinExistence type="inferred from homology"/>
<dbReference type="EC" id="1.2.1.41" evidence="1"/>
<dbReference type="EMBL" id="CP000538">
    <property type="protein sequence ID" value="EAQ73086.1"/>
    <property type="molecule type" value="Genomic_DNA"/>
</dbReference>
<dbReference type="RefSeq" id="WP_009882279.1">
    <property type="nucleotide sequence ID" value="NC_008787.1"/>
</dbReference>
<dbReference type="SMR" id="A1VYR7"/>
<dbReference type="KEGG" id="cjj:CJJ81176_0583"/>
<dbReference type="eggNOG" id="COG0014">
    <property type="taxonomic scope" value="Bacteria"/>
</dbReference>
<dbReference type="HOGENOM" id="CLU_030231_0_0_7"/>
<dbReference type="UniPathway" id="UPA00098">
    <property type="reaction ID" value="UER00360"/>
</dbReference>
<dbReference type="Proteomes" id="UP000000646">
    <property type="component" value="Chromosome"/>
</dbReference>
<dbReference type="GO" id="GO:0005737">
    <property type="term" value="C:cytoplasm"/>
    <property type="evidence" value="ECO:0007669"/>
    <property type="project" value="UniProtKB-SubCell"/>
</dbReference>
<dbReference type="GO" id="GO:0004350">
    <property type="term" value="F:glutamate-5-semialdehyde dehydrogenase activity"/>
    <property type="evidence" value="ECO:0007669"/>
    <property type="project" value="UniProtKB-UniRule"/>
</dbReference>
<dbReference type="GO" id="GO:0050661">
    <property type="term" value="F:NADP binding"/>
    <property type="evidence" value="ECO:0007669"/>
    <property type="project" value="InterPro"/>
</dbReference>
<dbReference type="GO" id="GO:0055129">
    <property type="term" value="P:L-proline biosynthetic process"/>
    <property type="evidence" value="ECO:0007669"/>
    <property type="project" value="UniProtKB-UniRule"/>
</dbReference>
<dbReference type="CDD" id="cd07079">
    <property type="entry name" value="ALDH_F18-19_ProA-GPR"/>
    <property type="match status" value="1"/>
</dbReference>
<dbReference type="FunFam" id="3.40.309.10:FF:000006">
    <property type="entry name" value="Gamma-glutamyl phosphate reductase"/>
    <property type="match status" value="1"/>
</dbReference>
<dbReference type="Gene3D" id="3.40.605.10">
    <property type="entry name" value="Aldehyde Dehydrogenase, Chain A, domain 1"/>
    <property type="match status" value="1"/>
</dbReference>
<dbReference type="Gene3D" id="3.40.309.10">
    <property type="entry name" value="Aldehyde Dehydrogenase, Chain A, domain 2"/>
    <property type="match status" value="1"/>
</dbReference>
<dbReference type="HAMAP" id="MF_00412">
    <property type="entry name" value="ProA"/>
    <property type="match status" value="1"/>
</dbReference>
<dbReference type="InterPro" id="IPR016161">
    <property type="entry name" value="Ald_DH/histidinol_DH"/>
</dbReference>
<dbReference type="InterPro" id="IPR016163">
    <property type="entry name" value="Ald_DH_C"/>
</dbReference>
<dbReference type="InterPro" id="IPR016162">
    <property type="entry name" value="Ald_DH_N"/>
</dbReference>
<dbReference type="InterPro" id="IPR015590">
    <property type="entry name" value="Aldehyde_DH_dom"/>
</dbReference>
<dbReference type="InterPro" id="IPR020593">
    <property type="entry name" value="G-glutamylP_reductase_CS"/>
</dbReference>
<dbReference type="InterPro" id="IPR012134">
    <property type="entry name" value="Glu-5-SA_DH"/>
</dbReference>
<dbReference type="InterPro" id="IPR000965">
    <property type="entry name" value="GPR_dom"/>
</dbReference>
<dbReference type="NCBIfam" id="NF001221">
    <property type="entry name" value="PRK00197.1"/>
    <property type="match status" value="1"/>
</dbReference>
<dbReference type="NCBIfam" id="TIGR00407">
    <property type="entry name" value="proA"/>
    <property type="match status" value="1"/>
</dbReference>
<dbReference type="PANTHER" id="PTHR11063:SF8">
    <property type="entry name" value="DELTA-1-PYRROLINE-5-CARBOXYLATE SYNTHASE"/>
    <property type="match status" value="1"/>
</dbReference>
<dbReference type="PANTHER" id="PTHR11063">
    <property type="entry name" value="GLUTAMATE SEMIALDEHYDE DEHYDROGENASE"/>
    <property type="match status" value="1"/>
</dbReference>
<dbReference type="Pfam" id="PF00171">
    <property type="entry name" value="Aldedh"/>
    <property type="match status" value="1"/>
</dbReference>
<dbReference type="PIRSF" id="PIRSF000151">
    <property type="entry name" value="GPR"/>
    <property type="match status" value="1"/>
</dbReference>
<dbReference type="SUPFAM" id="SSF53720">
    <property type="entry name" value="ALDH-like"/>
    <property type="match status" value="1"/>
</dbReference>
<dbReference type="PROSITE" id="PS01223">
    <property type="entry name" value="PROA"/>
    <property type="match status" value="1"/>
</dbReference>
<keyword id="KW-0028">Amino-acid biosynthesis</keyword>
<keyword id="KW-0963">Cytoplasm</keyword>
<keyword id="KW-0521">NADP</keyword>
<keyword id="KW-0560">Oxidoreductase</keyword>
<keyword id="KW-0641">Proline biosynthesis</keyword>
<organism>
    <name type="scientific">Campylobacter jejuni subsp. jejuni serotype O:23/36 (strain 81-176)</name>
    <dbReference type="NCBI Taxonomy" id="354242"/>
    <lineage>
        <taxon>Bacteria</taxon>
        <taxon>Pseudomonadati</taxon>
        <taxon>Campylobacterota</taxon>
        <taxon>Epsilonproteobacteria</taxon>
        <taxon>Campylobacterales</taxon>
        <taxon>Campylobacteraceae</taxon>
        <taxon>Campylobacter</taxon>
    </lineage>
</organism>
<accession>A1VYR7</accession>
<protein>
    <recommendedName>
        <fullName evidence="1">Gamma-glutamyl phosphate reductase</fullName>
        <shortName evidence="1">GPR</shortName>
        <ecNumber evidence="1">1.2.1.41</ecNumber>
    </recommendedName>
    <alternativeName>
        <fullName evidence="1">Glutamate-5-semialdehyde dehydrogenase</fullName>
    </alternativeName>
    <alternativeName>
        <fullName evidence="1">Glutamyl-gamma-semialdehyde dehydrogenase</fullName>
        <shortName evidence="1">GSA dehydrogenase</shortName>
    </alternativeName>
</protein>
<comment type="function">
    <text evidence="1">Catalyzes the NADPH-dependent reduction of L-glutamate 5-phosphate into L-glutamate 5-semialdehyde and phosphate. The product spontaneously undergoes cyclization to form 1-pyrroline-5-carboxylate.</text>
</comment>
<comment type="catalytic activity">
    <reaction evidence="1">
        <text>L-glutamate 5-semialdehyde + phosphate + NADP(+) = L-glutamyl 5-phosphate + NADPH + H(+)</text>
        <dbReference type="Rhea" id="RHEA:19541"/>
        <dbReference type="ChEBI" id="CHEBI:15378"/>
        <dbReference type="ChEBI" id="CHEBI:43474"/>
        <dbReference type="ChEBI" id="CHEBI:57783"/>
        <dbReference type="ChEBI" id="CHEBI:58066"/>
        <dbReference type="ChEBI" id="CHEBI:58274"/>
        <dbReference type="ChEBI" id="CHEBI:58349"/>
        <dbReference type="EC" id="1.2.1.41"/>
    </reaction>
</comment>
<comment type="pathway">
    <text evidence="1">Amino-acid biosynthesis; L-proline biosynthesis; L-glutamate 5-semialdehyde from L-glutamate: step 2/2.</text>
</comment>
<comment type="subcellular location">
    <subcellularLocation>
        <location evidence="1">Cytoplasm</location>
    </subcellularLocation>
</comment>
<comment type="similarity">
    <text evidence="1">Belongs to the gamma-glutamyl phosphate reductase family.</text>
</comment>
<reference key="1">
    <citation type="submission" date="2006-12" db="EMBL/GenBank/DDBJ databases">
        <authorList>
            <person name="Fouts D.E."/>
            <person name="Nelson K.E."/>
            <person name="Sebastian Y."/>
        </authorList>
    </citation>
    <scope>NUCLEOTIDE SEQUENCE [LARGE SCALE GENOMIC DNA]</scope>
    <source>
        <strain>81-176</strain>
    </source>
</reference>
<sequence>MRNLLENIKKNSQKLLNLTPKDKEKIILKLAQILRENFKIILEANKKDMANFTKSGAMKDRLLLDEKRILALCEGLEKIAYIEDPIGKISKGWKNYAGLSIQKMSIPLGLICVIYEARPSLSAEIAALMIKSSNACVFKGGSEAKFTNEAIFTLVNKVLKEFDLQDCFAMFTQRDEILQILAFDDLIDVIIPRGSSNMIQEIANNTKIPLIKQNKGLCHAFVDQSANLDMALKIILNAKCQRVSVCNALETLLIHEKIAKNFISLLIPEFKKFKVKIHAHENALAYFNNSNLKIFKANENTFDTEWLDFALSVKLVKDCDEAIEHINKHSSLHSETIISNDASNIAKFQRLINSSCIYANASTRFSDGGEFGFGGEVGISTSKLHARGPMGIEDICTYKYIINGEGQIRE</sequence>
<name>PROA_CAMJJ</name>
<evidence type="ECO:0000255" key="1">
    <source>
        <dbReference type="HAMAP-Rule" id="MF_00412"/>
    </source>
</evidence>
<gene>
    <name evidence="1" type="primary">proA</name>
    <name type="ordered locus">CJJ81176_0583</name>
</gene>